<evidence type="ECO:0000255" key="1">
    <source>
        <dbReference type="HAMAP-Rule" id="MF_00332"/>
    </source>
</evidence>
<evidence type="ECO:0000256" key="2">
    <source>
        <dbReference type="SAM" id="MobiDB-lite"/>
    </source>
</evidence>
<reference key="1">
    <citation type="journal article" date="2007" name="Science">
        <title>The Calyptogena magnifica chemoautotrophic symbiont genome.</title>
        <authorList>
            <person name="Newton I.L.G."/>
            <person name="Woyke T."/>
            <person name="Auchtung T.A."/>
            <person name="Dilly G.F."/>
            <person name="Dutton R.J."/>
            <person name="Fisher M.C."/>
            <person name="Fontanez K.M."/>
            <person name="Lau E."/>
            <person name="Stewart F.J."/>
            <person name="Richardson P.M."/>
            <person name="Barry K.W."/>
            <person name="Saunders E."/>
            <person name="Detter J.C."/>
            <person name="Wu D."/>
            <person name="Eisen J.A."/>
            <person name="Cavanaugh C.M."/>
        </authorList>
    </citation>
    <scope>NUCLEOTIDE SEQUENCE [LARGE SCALE GENOMIC DNA]</scope>
</reference>
<protein>
    <recommendedName>
        <fullName evidence="1">Chaperone protein DnaK</fullName>
    </recommendedName>
    <alternativeName>
        <fullName evidence="1">HSP70</fullName>
    </alternativeName>
    <alternativeName>
        <fullName evidence="1">Heat shock 70 kDa protein</fullName>
    </alternativeName>
    <alternativeName>
        <fullName evidence="1">Heat shock protein 70</fullName>
    </alternativeName>
</protein>
<dbReference type="EMBL" id="CP000488">
    <property type="protein sequence ID" value="ABL02129.1"/>
    <property type="molecule type" value="Genomic_DNA"/>
</dbReference>
<dbReference type="RefSeq" id="WP_011737754.1">
    <property type="nucleotide sequence ID" value="NC_008610.1"/>
</dbReference>
<dbReference type="SMR" id="A1AW22"/>
<dbReference type="STRING" id="413404.Rmag_0353"/>
<dbReference type="KEGG" id="rma:Rmag_0353"/>
<dbReference type="eggNOG" id="COG0443">
    <property type="taxonomic scope" value="Bacteria"/>
</dbReference>
<dbReference type="HOGENOM" id="CLU_005965_2_1_6"/>
<dbReference type="OrthoDB" id="9766019at2"/>
<dbReference type="Proteomes" id="UP000002587">
    <property type="component" value="Chromosome"/>
</dbReference>
<dbReference type="GO" id="GO:0005524">
    <property type="term" value="F:ATP binding"/>
    <property type="evidence" value="ECO:0007669"/>
    <property type="project" value="UniProtKB-UniRule"/>
</dbReference>
<dbReference type="GO" id="GO:0140662">
    <property type="term" value="F:ATP-dependent protein folding chaperone"/>
    <property type="evidence" value="ECO:0007669"/>
    <property type="project" value="InterPro"/>
</dbReference>
<dbReference type="GO" id="GO:0051082">
    <property type="term" value="F:unfolded protein binding"/>
    <property type="evidence" value="ECO:0007669"/>
    <property type="project" value="InterPro"/>
</dbReference>
<dbReference type="CDD" id="cd10234">
    <property type="entry name" value="ASKHA_NBD_HSP70_DnaK-like"/>
    <property type="match status" value="1"/>
</dbReference>
<dbReference type="FunFam" id="2.60.34.10:FF:000014">
    <property type="entry name" value="Chaperone protein DnaK HSP70"/>
    <property type="match status" value="1"/>
</dbReference>
<dbReference type="FunFam" id="3.30.30.30:FF:000003">
    <property type="entry name" value="Heat shock protein 9"/>
    <property type="match status" value="1"/>
</dbReference>
<dbReference type="FunFam" id="1.20.1270.10:FF:000001">
    <property type="entry name" value="Molecular chaperone DnaK"/>
    <property type="match status" value="1"/>
</dbReference>
<dbReference type="FunFam" id="3.30.420.40:FF:000004">
    <property type="entry name" value="Molecular chaperone DnaK"/>
    <property type="match status" value="1"/>
</dbReference>
<dbReference type="FunFam" id="3.90.640.10:FF:000003">
    <property type="entry name" value="Molecular chaperone DnaK"/>
    <property type="match status" value="1"/>
</dbReference>
<dbReference type="Gene3D" id="1.20.1270.10">
    <property type="match status" value="1"/>
</dbReference>
<dbReference type="Gene3D" id="3.30.420.40">
    <property type="match status" value="2"/>
</dbReference>
<dbReference type="Gene3D" id="3.90.640.10">
    <property type="entry name" value="Actin, Chain A, domain 4"/>
    <property type="match status" value="1"/>
</dbReference>
<dbReference type="Gene3D" id="2.60.34.10">
    <property type="entry name" value="Substrate Binding Domain Of DNAk, Chain A, domain 1"/>
    <property type="match status" value="1"/>
</dbReference>
<dbReference type="HAMAP" id="MF_00332">
    <property type="entry name" value="DnaK"/>
    <property type="match status" value="1"/>
</dbReference>
<dbReference type="InterPro" id="IPR043129">
    <property type="entry name" value="ATPase_NBD"/>
</dbReference>
<dbReference type="InterPro" id="IPR012725">
    <property type="entry name" value="Chaperone_DnaK"/>
</dbReference>
<dbReference type="InterPro" id="IPR018181">
    <property type="entry name" value="Heat_shock_70_CS"/>
</dbReference>
<dbReference type="InterPro" id="IPR029048">
    <property type="entry name" value="HSP70_C_sf"/>
</dbReference>
<dbReference type="InterPro" id="IPR029047">
    <property type="entry name" value="HSP70_peptide-bd_sf"/>
</dbReference>
<dbReference type="InterPro" id="IPR013126">
    <property type="entry name" value="Hsp_70_fam"/>
</dbReference>
<dbReference type="NCBIfam" id="NF001413">
    <property type="entry name" value="PRK00290.1"/>
    <property type="match status" value="1"/>
</dbReference>
<dbReference type="NCBIfam" id="NF003520">
    <property type="entry name" value="PRK05183.1"/>
    <property type="match status" value="1"/>
</dbReference>
<dbReference type="NCBIfam" id="TIGR02350">
    <property type="entry name" value="prok_dnaK"/>
    <property type="match status" value="1"/>
</dbReference>
<dbReference type="PANTHER" id="PTHR19375">
    <property type="entry name" value="HEAT SHOCK PROTEIN 70KDA"/>
    <property type="match status" value="1"/>
</dbReference>
<dbReference type="Pfam" id="PF00012">
    <property type="entry name" value="HSP70"/>
    <property type="match status" value="1"/>
</dbReference>
<dbReference type="PRINTS" id="PR00301">
    <property type="entry name" value="HEATSHOCK70"/>
</dbReference>
<dbReference type="SUPFAM" id="SSF53067">
    <property type="entry name" value="Actin-like ATPase domain"/>
    <property type="match status" value="2"/>
</dbReference>
<dbReference type="SUPFAM" id="SSF100934">
    <property type="entry name" value="Heat shock protein 70kD (HSP70), C-terminal subdomain"/>
    <property type="match status" value="1"/>
</dbReference>
<dbReference type="SUPFAM" id="SSF100920">
    <property type="entry name" value="Heat shock protein 70kD (HSP70), peptide-binding domain"/>
    <property type="match status" value="1"/>
</dbReference>
<dbReference type="PROSITE" id="PS00297">
    <property type="entry name" value="HSP70_1"/>
    <property type="match status" value="1"/>
</dbReference>
<dbReference type="PROSITE" id="PS00329">
    <property type="entry name" value="HSP70_2"/>
    <property type="match status" value="1"/>
</dbReference>
<dbReference type="PROSITE" id="PS01036">
    <property type="entry name" value="HSP70_3"/>
    <property type="match status" value="1"/>
</dbReference>
<proteinExistence type="inferred from homology"/>
<sequence length="635" mass="68962">MSRIIGIDLGTTNSCVAIMDGGNVKIIENSEGDRTTPSIIAYPKDSEEVLVGQPAKRQAVTNPENTLYAIKRLIGRRFDEDAVQKDINLVPYKIVKVDNGDAWVEVKGKKMAAPEISAKVIGKMKKTAEDYLGEEVTEAVITVPAYFNDSQRQATKDAGKIAGLNVKRIINEPTAAALAYGVDKVKGNKTIAVYDLGGGTFDVSIIEMEDIDGEKHFEVLSTNGDTFLGGEDFDQRIIGYLVDEFKRDQGVDLTNDPMALQRLKEAAEKAKIELSSSEQTDVNLPYVTADASGPKHLNIKITRAKLELLVEDLLKRTIEPCKTALKDADLSASDIDEVILVGGQTRMPKVTKMVQDFFGKEPKKDVNPDEAVAMGAAIQAGVLGGDVKDVLLLDVTPLSLGIETMGGIMTKLIEKNTTIPTNASQIFSTAVDNQSAVTVHVLQGERNMSSANKSLGQFNLEGIPNAPKGQPQVEVTFDIDSDGILDVSAKDKNTGKEQSITIKASSGLSDEEVEKMIKDAEAHADEDKKFQELVASKNMADSLIHSTKKTLEELKNEVSDDEKSVIEMAITELEKAIKNDDKKAIDAKIQTLSKKAQPLTEKVQAKSSAENTSKEKSKADDDVVDADFEEVKDDK</sequence>
<keyword id="KW-0067">ATP-binding</keyword>
<keyword id="KW-0143">Chaperone</keyword>
<keyword id="KW-0547">Nucleotide-binding</keyword>
<keyword id="KW-0597">Phosphoprotein</keyword>
<keyword id="KW-0346">Stress response</keyword>
<feature type="chain" id="PRO_1000059654" description="Chaperone protein DnaK">
    <location>
        <begin position="1"/>
        <end position="635"/>
    </location>
</feature>
<feature type="region of interest" description="Disordered" evidence="2">
    <location>
        <begin position="595"/>
        <end position="635"/>
    </location>
</feature>
<feature type="compositionally biased region" description="Basic and acidic residues" evidence="2">
    <location>
        <begin position="612"/>
        <end position="621"/>
    </location>
</feature>
<feature type="compositionally biased region" description="Acidic residues" evidence="2">
    <location>
        <begin position="622"/>
        <end position="635"/>
    </location>
</feature>
<feature type="modified residue" description="Phosphothreonine; by autocatalysis" evidence="1">
    <location>
        <position position="200"/>
    </location>
</feature>
<gene>
    <name evidence="1" type="primary">dnaK</name>
    <name type="ordered locus">Rmag_0353</name>
</gene>
<comment type="function">
    <text evidence="1">Acts as a chaperone.</text>
</comment>
<comment type="induction">
    <text evidence="1">By stress conditions e.g. heat shock.</text>
</comment>
<comment type="similarity">
    <text evidence="1">Belongs to the heat shock protein 70 family.</text>
</comment>
<accession>A1AW22</accession>
<organism>
    <name type="scientific">Ruthia magnifica subsp. Calyptogena magnifica</name>
    <dbReference type="NCBI Taxonomy" id="413404"/>
    <lineage>
        <taxon>Bacteria</taxon>
        <taxon>Pseudomonadati</taxon>
        <taxon>Pseudomonadota</taxon>
        <taxon>Gammaproteobacteria</taxon>
        <taxon>Candidatus Pseudothioglobaceae</taxon>
        <taxon>Candidatus Ruthturnera</taxon>
    </lineage>
</organism>
<name>DNAK_RUTMC</name>